<name>DEOC_MYCMM</name>
<keyword id="KW-0963">Cytoplasm</keyword>
<keyword id="KW-0456">Lyase</keyword>
<keyword id="KW-1185">Reference proteome</keyword>
<keyword id="KW-0704">Schiff base</keyword>
<protein>
    <recommendedName>
        <fullName evidence="1">Deoxyribose-phosphate aldolase</fullName>
        <shortName evidence="1">DERA</shortName>
        <ecNumber evidence="1">4.1.2.4</ecNumber>
    </recommendedName>
    <alternativeName>
        <fullName evidence="1">2-deoxy-D-ribose 5-phosphate aldolase</fullName>
    </alternativeName>
    <alternativeName>
        <fullName evidence="1">Phosphodeoxyriboaldolase</fullName>
        <shortName evidence="1">Deoxyriboaldolase</shortName>
    </alternativeName>
</protein>
<feature type="chain" id="PRO_1000094852" description="Deoxyribose-phosphate aldolase">
    <location>
        <begin position="1"/>
        <end position="226"/>
    </location>
</feature>
<feature type="active site" description="Proton donor/acceptor" evidence="1">
    <location>
        <position position="93"/>
    </location>
</feature>
<feature type="active site" description="Schiff-base intermediate with acetaldehyde" evidence="1">
    <location>
        <position position="159"/>
    </location>
</feature>
<feature type="active site" description="Proton donor/acceptor" evidence="1">
    <location>
        <position position="189"/>
    </location>
</feature>
<organism>
    <name type="scientific">Mycobacterium marinum (strain ATCC BAA-535 / M)</name>
    <dbReference type="NCBI Taxonomy" id="216594"/>
    <lineage>
        <taxon>Bacteria</taxon>
        <taxon>Bacillati</taxon>
        <taxon>Actinomycetota</taxon>
        <taxon>Actinomycetes</taxon>
        <taxon>Mycobacteriales</taxon>
        <taxon>Mycobacteriaceae</taxon>
        <taxon>Mycobacterium</taxon>
        <taxon>Mycobacterium ulcerans group</taxon>
    </lineage>
</organism>
<accession>B2HQU3</accession>
<comment type="function">
    <text evidence="1">Catalyzes a reversible aldol reaction between acetaldehyde and D-glyceraldehyde 3-phosphate to generate 2-deoxy-D-ribose 5-phosphate.</text>
</comment>
<comment type="catalytic activity">
    <reaction evidence="1">
        <text>2-deoxy-D-ribose 5-phosphate = D-glyceraldehyde 3-phosphate + acetaldehyde</text>
        <dbReference type="Rhea" id="RHEA:12821"/>
        <dbReference type="ChEBI" id="CHEBI:15343"/>
        <dbReference type="ChEBI" id="CHEBI:59776"/>
        <dbReference type="ChEBI" id="CHEBI:62877"/>
        <dbReference type="EC" id="4.1.2.4"/>
    </reaction>
</comment>
<comment type="pathway">
    <text evidence="1">Carbohydrate degradation; 2-deoxy-D-ribose 1-phosphate degradation; D-glyceraldehyde 3-phosphate and acetaldehyde from 2-deoxy-alpha-D-ribose 1-phosphate: step 2/2.</text>
</comment>
<comment type="subcellular location">
    <subcellularLocation>
        <location evidence="1">Cytoplasm</location>
    </subcellularLocation>
</comment>
<comment type="similarity">
    <text evidence="1">Belongs to the DeoC/FbaB aldolase family. DeoC type 1 subfamily.</text>
</comment>
<evidence type="ECO:0000255" key="1">
    <source>
        <dbReference type="HAMAP-Rule" id="MF_00114"/>
    </source>
</evidence>
<sequence>MPGQPTRDQVAALVDHTLLKPEATAADVVALVAEAADLGVYAVCVSPSMVPAAVSAGGVRVATVAGFPSGKHASAIKAHEAALAVACGAVEVDMVIDVGAALAGHLDAVRSDIEAVRCATSGAVLKVIVESAALLGLADESTLIGVCRVAEDAGADFVKTSTGFHPAGGASTRAVEVMASAVGGRLGVKASGGIRTATDAVAMLSAGATRLGLSGTRAVLEGLGQN</sequence>
<reference key="1">
    <citation type="journal article" date="2008" name="Genome Res.">
        <title>Insights from the complete genome sequence of Mycobacterium marinum on the evolution of Mycobacterium tuberculosis.</title>
        <authorList>
            <person name="Stinear T.P."/>
            <person name="Seemann T."/>
            <person name="Harrison P.F."/>
            <person name="Jenkin G.A."/>
            <person name="Davies J.K."/>
            <person name="Johnson P.D."/>
            <person name="Abdellah Z."/>
            <person name="Arrowsmith C."/>
            <person name="Chillingworth T."/>
            <person name="Churcher C."/>
            <person name="Clarke K."/>
            <person name="Cronin A."/>
            <person name="Davis P."/>
            <person name="Goodhead I."/>
            <person name="Holroyd N."/>
            <person name="Jagels K."/>
            <person name="Lord A."/>
            <person name="Moule S."/>
            <person name="Mungall K."/>
            <person name="Norbertczak H."/>
            <person name="Quail M.A."/>
            <person name="Rabbinowitsch E."/>
            <person name="Walker D."/>
            <person name="White B."/>
            <person name="Whitehead S."/>
            <person name="Small P.L."/>
            <person name="Brosch R."/>
            <person name="Ramakrishnan L."/>
            <person name="Fischbach M.A."/>
            <person name="Parkhill J."/>
            <person name="Cole S.T."/>
        </authorList>
    </citation>
    <scope>NUCLEOTIDE SEQUENCE [LARGE SCALE GENOMIC DNA]</scope>
    <source>
        <strain>ATCC BAA-535 / M</strain>
    </source>
</reference>
<dbReference type="EC" id="4.1.2.4" evidence="1"/>
<dbReference type="EMBL" id="CP000854">
    <property type="protein sequence ID" value="ACC39263.1"/>
    <property type="molecule type" value="Genomic_DNA"/>
</dbReference>
<dbReference type="RefSeq" id="WP_011742101.1">
    <property type="nucleotide sequence ID" value="NC_010612.1"/>
</dbReference>
<dbReference type="SMR" id="B2HQU3"/>
<dbReference type="STRING" id="216594.MMAR_0803"/>
<dbReference type="GeneID" id="93438829"/>
<dbReference type="KEGG" id="mmi:MMAR_0803"/>
<dbReference type="eggNOG" id="COG0274">
    <property type="taxonomic scope" value="Bacteria"/>
</dbReference>
<dbReference type="HOGENOM" id="CLU_053595_0_0_11"/>
<dbReference type="OrthoDB" id="6579831at2"/>
<dbReference type="UniPathway" id="UPA00002">
    <property type="reaction ID" value="UER00468"/>
</dbReference>
<dbReference type="Proteomes" id="UP000001190">
    <property type="component" value="Chromosome"/>
</dbReference>
<dbReference type="GO" id="GO:0005737">
    <property type="term" value="C:cytoplasm"/>
    <property type="evidence" value="ECO:0007669"/>
    <property type="project" value="UniProtKB-SubCell"/>
</dbReference>
<dbReference type="GO" id="GO:0004139">
    <property type="term" value="F:deoxyribose-phosphate aldolase activity"/>
    <property type="evidence" value="ECO:0007669"/>
    <property type="project" value="UniProtKB-UniRule"/>
</dbReference>
<dbReference type="GO" id="GO:0006018">
    <property type="term" value="P:2-deoxyribose 1-phosphate catabolic process"/>
    <property type="evidence" value="ECO:0007669"/>
    <property type="project" value="UniProtKB-UniRule"/>
</dbReference>
<dbReference type="GO" id="GO:0016052">
    <property type="term" value="P:carbohydrate catabolic process"/>
    <property type="evidence" value="ECO:0007669"/>
    <property type="project" value="TreeGrafter"/>
</dbReference>
<dbReference type="GO" id="GO:0009264">
    <property type="term" value="P:deoxyribonucleotide catabolic process"/>
    <property type="evidence" value="ECO:0007669"/>
    <property type="project" value="InterPro"/>
</dbReference>
<dbReference type="CDD" id="cd00959">
    <property type="entry name" value="DeoC"/>
    <property type="match status" value="1"/>
</dbReference>
<dbReference type="Gene3D" id="3.20.20.70">
    <property type="entry name" value="Aldolase class I"/>
    <property type="match status" value="1"/>
</dbReference>
<dbReference type="HAMAP" id="MF_00114">
    <property type="entry name" value="DeoC_type1"/>
    <property type="match status" value="1"/>
</dbReference>
<dbReference type="InterPro" id="IPR013785">
    <property type="entry name" value="Aldolase_TIM"/>
</dbReference>
<dbReference type="InterPro" id="IPR011343">
    <property type="entry name" value="DeoC"/>
</dbReference>
<dbReference type="InterPro" id="IPR002915">
    <property type="entry name" value="DeoC/FbaB/LacD_aldolase"/>
</dbReference>
<dbReference type="InterPro" id="IPR028581">
    <property type="entry name" value="DeoC_typeI"/>
</dbReference>
<dbReference type="NCBIfam" id="TIGR00126">
    <property type="entry name" value="deoC"/>
    <property type="match status" value="1"/>
</dbReference>
<dbReference type="PANTHER" id="PTHR10889">
    <property type="entry name" value="DEOXYRIBOSE-PHOSPHATE ALDOLASE"/>
    <property type="match status" value="1"/>
</dbReference>
<dbReference type="PANTHER" id="PTHR10889:SF1">
    <property type="entry name" value="DEOXYRIBOSE-PHOSPHATE ALDOLASE"/>
    <property type="match status" value="1"/>
</dbReference>
<dbReference type="Pfam" id="PF01791">
    <property type="entry name" value="DeoC"/>
    <property type="match status" value="1"/>
</dbReference>
<dbReference type="PIRSF" id="PIRSF001357">
    <property type="entry name" value="DeoC"/>
    <property type="match status" value="1"/>
</dbReference>
<dbReference type="SMART" id="SM01133">
    <property type="entry name" value="DeoC"/>
    <property type="match status" value="1"/>
</dbReference>
<dbReference type="SUPFAM" id="SSF51569">
    <property type="entry name" value="Aldolase"/>
    <property type="match status" value="1"/>
</dbReference>
<gene>
    <name evidence="1" type="primary">deoC</name>
    <name type="ordered locus">MMAR_0803</name>
</gene>
<proteinExistence type="inferred from homology"/>